<keyword id="KW-0002">3D-structure</keyword>
<keyword id="KW-0966">Cell projection</keyword>
<keyword id="KW-0969">Cilium</keyword>
<keyword id="KW-0963">Cytoplasm</keyword>
<keyword id="KW-0206">Cytoskeleton</keyword>
<keyword id="KW-0282">Flagellum</keyword>
<keyword id="KW-0539">Nucleus</keyword>
<keyword id="KW-1185">Reference proteome</keyword>
<feature type="chain" id="PRO_0000359751" description="Cilia- and flagella-associated protein 68">
    <location>
        <begin position="1"/>
        <end position="169"/>
    </location>
</feature>
<feature type="region of interest" description="Mn 1" evidence="1">
    <location>
        <begin position="98"/>
        <end position="109"/>
    </location>
</feature>
<feature type="region of interest" description="Mn 2" evidence="1">
    <location>
        <begin position="139"/>
        <end position="149"/>
    </location>
</feature>
<gene>
    <name type="primary">CFAP68</name>
</gene>
<proteinExistence type="evidence at protein level"/>
<evidence type="ECO:0000250" key="1">
    <source>
        <dbReference type="UniProtKB" id="Q9H5F2"/>
    </source>
</evidence>
<evidence type="ECO:0000269" key="2">
    <source>
    </source>
</evidence>
<evidence type="ECO:0000305" key="3"/>
<evidence type="ECO:0007744" key="4">
    <source>
        <dbReference type="PDB" id="8OTZ"/>
    </source>
</evidence>
<dbReference type="EMBL" id="BC111317">
    <property type="protein sequence ID" value="AAI11318.1"/>
    <property type="molecule type" value="mRNA"/>
</dbReference>
<dbReference type="RefSeq" id="NP_001033266.1">
    <property type="nucleotide sequence ID" value="NM_001038177.1"/>
</dbReference>
<dbReference type="PDB" id="8OTZ">
    <property type="method" value="EM"/>
    <property type="resolution" value="3.60 A"/>
    <property type="chains" value="Q=1-169"/>
</dbReference>
<dbReference type="PDBsum" id="8OTZ"/>
<dbReference type="EMDB" id="EMD-17187"/>
<dbReference type="EMDB" id="EMD-50664"/>
<dbReference type="SMR" id="Q2T9Q3"/>
<dbReference type="FunCoup" id="Q2T9Q3">
    <property type="interactions" value="186"/>
</dbReference>
<dbReference type="STRING" id="9913.ENSBTAP00000056332"/>
<dbReference type="PaxDb" id="9913-ENSBTAP00000006511"/>
<dbReference type="GeneID" id="538766"/>
<dbReference type="KEGG" id="bta:538766"/>
<dbReference type="CTD" id="64776"/>
<dbReference type="VEuPathDB" id="HostDB:ENSBTAG00000004951"/>
<dbReference type="eggNOG" id="ENOG502S5NG">
    <property type="taxonomic scope" value="Eukaryota"/>
</dbReference>
<dbReference type="HOGENOM" id="CLU_117702_0_1_1"/>
<dbReference type="InParanoid" id="Q2T9Q3"/>
<dbReference type="OrthoDB" id="9970063at2759"/>
<dbReference type="TreeFam" id="TF329225"/>
<dbReference type="Proteomes" id="UP000009136">
    <property type="component" value="Chromosome 15"/>
</dbReference>
<dbReference type="Bgee" id="ENSBTAG00000004951">
    <property type="expression patterns" value="Expressed in semen and 71 other cell types or tissues"/>
</dbReference>
<dbReference type="GO" id="GO:0160111">
    <property type="term" value="C:axonemal A tubule inner sheath"/>
    <property type="evidence" value="ECO:0000250"/>
    <property type="project" value="UniProtKB"/>
</dbReference>
<dbReference type="GO" id="GO:0005930">
    <property type="term" value="C:axoneme"/>
    <property type="evidence" value="ECO:0000250"/>
    <property type="project" value="UniProtKB"/>
</dbReference>
<dbReference type="GO" id="GO:0005929">
    <property type="term" value="C:cilium"/>
    <property type="evidence" value="ECO:0000250"/>
    <property type="project" value="UniProtKB"/>
</dbReference>
<dbReference type="GO" id="GO:0005634">
    <property type="term" value="C:nucleus"/>
    <property type="evidence" value="ECO:0007669"/>
    <property type="project" value="UniProtKB-SubCell"/>
</dbReference>
<dbReference type="GO" id="GO:0036126">
    <property type="term" value="C:sperm flagellum"/>
    <property type="evidence" value="ECO:0000250"/>
    <property type="project" value="UniProtKB"/>
</dbReference>
<dbReference type="GO" id="GO:0030317">
    <property type="term" value="P:flagellated sperm motility"/>
    <property type="evidence" value="ECO:0000250"/>
    <property type="project" value="UniProtKB"/>
</dbReference>
<dbReference type="InterPro" id="IPR009524">
    <property type="entry name" value="CFAP68"/>
</dbReference>
<dbReference type="InterPro" id="IPR037662">
    <property type="entry name" value="CFAP68/107"/>
</dbReference>
<dbReference type="PANTHER" id="PTHR31180">
    <property type="entry name" value="CILIA- AND FLAGELLA-ASSOCIATED PROTEIN 107-RELATED"/>
    <property type="match status" value="1"/>
</dbReference>
<dbReference type="PANTHER" id="PTHR31180:SF3">
    <property type="entry name" value="EXPRESSED SEQUENCE EH456644"/>
    <property type="match status" value="1"/>
</dbReference>
<dbReference type="Pfam" id="PF06608">
    <property type="entry name" value="CFAP68"/>
    <property type="match status" value="1"/>
</dbReference>
<protein>
    <recommendedName>
        <fullName>Cilia- and flagella-associated protein 68</fullName>
    </recommendedName>
</protein>
<reference key="1">
    <citation type="submission" date="2005-12" db="EMBL/GenBank/DDBJ databases">
        <authorList>
            <consortium name="NIH - Mammalian Gene Collection (MGC) project"/>
        </authorList>
    </citation>
    <scope>NUCLEOTIDE SEQUENCE [LARGE SCALE MRNA]</scope>
    <source>
        <strain>Crossbred X Angus</strain>
        <tissue>Liver</tissue>
    </source>
</reference>
<reference evidence="4" key="2">
    <citation type="journal article" date="2023" name="Cell">
        <title>Structural specializations of the sperm tail.</title>
        <authorList>
            <person name="Leung M.R."/>
            <person name="Zeng J."/>
            <person name="Wang X."/>
            <person name="Roelofs M.C."/>
            <person name="Huang W."/>
            <person name="Zenezini Chiozzi R."/>
            <person name="Hevler J.F."/>
            <person name="Heck A.J.R."/>
            <person name="Dutcher S.K."/>
            <person name="Brown A."/>
            <person name="Zhang R."/>
            <person name="Zeev-Ben-Mordehai T."/>
        </authorList>
    </citation>
    <scope>STRUCTURE BY ELECTRON MICROSCOPY (3.60 ANGSTROMS)</scope>
    <scope>FUNCTION</scope>
    <scope>SUBUNIT</scope>
    <scope>SUBCELLULAR LOCATION</scope>
</reference>
<comment type="function">
    <text evidence="2">Microtubule inner protein (MIP) part of the dynein-decorated doublet microtubules (DMTs) in cilia axoneme, which is required for motile cilia beating.</text>
</comment>
<comment type="subunit">
    <text evidence="2">Microtubule inner protein component of sperm flagellar doublet microtubules.</text>
</comment>
<comment type="subcellular location">
    <subcellularLocation>
        <location evidence="1">Cytoplasm</location>
        <location evidence="1">Cytoskeleton</location>
        <location evidence="1">Cilium axoneme</location>
    </subcellularLocation>
    <subcellularLocation>
        <location evidence="2">Cytoplasm</location>
        <location evidence="2">Cytoskeleton</location>
        <location evidence="2">Flagellum axoneme</location>
    </subcellularLocation>
    <subcellularLocation>
        <location evidence="1">Nucleus</location>
    </subcellularLocation>
    <subcellularLocation>
        <location evidence="1">Cell projection</location>
        <location evidence="1">Cilium</location>
    </subcellularLocation>
</comment>
<comment type="similarity">
    <text evidence="3">Belongs to the CFAP68 family.</text>
</comment>
<organism>
    <name type="scientific">Bos taurus</name>
    <name type="common">Bovine</name>
    <dbReference type="NCBI Taxonomy" id="9913"/>
    <lineage>
        <taxon>Eukaryota</taxon>
        <taxon>Metazoa</taxon>
        <taxon>Chordata</taxon>
        <taxon>Craniata</taxon>
        <taxon>Vertebrata</taxon>
        <taxon>Euteleostomi</taxon>
        <taxon>Mammalia</taxon>
        <taxon>Eutheria</taxon>
        <taxon>Laurasiatheria</taxon>
        <taxon>Artiodactyla</taxon>
        <taxon>Ruminantia</taxon>
        <taxon>Pecora</taxon>
        <taxon>Bovidae</taxon>
        <taxon>Bovinae</taxon>
        <taxon>Bos</taxon>
    </lineage>
</organism>
<accession>Q2T9Q3</accession>
<sequence>MTATDYHCYSEFFQRQVLACFLTNPHYGSLINADGHAEVWTDWNDMSKFFQYGWRCNTNEDAYSNRTLMGNWNQERYDLKNIVQPKPLPSQFGHYFETTYDTSYNNRRPLSTHRFKREPHWFPGHQPELVPPPYKCTEKSTYMTSYSKPQTDHHSVCVWNPSNCQFQSP</sequence>
<name>CFA68_BOVIN</name>